<accession>Q55CW7</accession>
<protein>
    <recommendedName>
        <fullName>Probable tetraspanin tspB</fullName>
    </recommendedName>
</protein>
<organism>
    <name type="scientific">Dictyostelium discoideum</name>
    <name type="common">Social amoeba</name>
    <dbReference type="NCBI Taxonomy" id="44689"/>
    <lineage>
        <taxon>Eukaryota</taxon>
        <taxon>Amoebozoa</taxon>
        <taxon>Evosea</taxon>
        <taxon>Eumycetozoa</taxon>
        <taxon>Dictyostelia</taxon>
        <taxon>Dictyosteliales</taxon>
        <taxon>Dictyosteliaceae</taxon>
        <taxon>Dictyostelium</taxon>
    </lineage>
</organism>
<evidence type="ECO:0000255" key="1"/>
<evidence type="ECO:0000305" key="2"/>
<gene>
    <name type="primary">tspB</name>
    <name type="ORF">DDB_G0269872</name>
</gene>
<dbReference type="EMBL" id="AAFI02000005">
    <property type="protein sequence ID" value="EAL72286.1"/>
    <property type="molecule type" value="Genomic_DNA"/>
</dbReference>
<dbReference type="RefSeq" id="XP_646364.1">
    <property type="nucleotide sequence ID" value="XM_641272.1"/>
</dbReference>
<dbReference type="SMR" id="Q55CW7"/>
<dbReference type="FunCoup" id="Q55CW7">
    <property type="interactions" value="1"/>
</dbReference>
<dbReference type="STRING" id="44689.Q55CW7"/>
<dbReference type="GlyCosmos" id="Q55CW7">
    <property type="glycosylation" value="3 sites, No reported glycans"/>
</dbReference>
<dbReference type="GlyGen" id="Q55CW7">
    <property type="glycosylation" value="3 sites"/>
</dbReference>
<dbReference type="PaxDb" id="44689-DDB0252567"/>
<dbReference type="ABCD" id="Q55CW7">
    <property type="antibodies" value="6 sequenced antibodies"/>
</dbReference>
<dbReference type="EnsemblProtists" id="EAL72286">
    <property type="protein sequence ID" value="EAL72286"/>
    <property type="gene ID" value="DDB_G0269872"/>
</dbReference>
<dbReference type="GeneID" id="8617319"/>
<dbReference type="KEGG" id="ddi:DDB_G0269872"/>
<dbReference type="dictyBase" id="DDB_G0269872">
    <property type="gene designation" value="tspB"/>
</dbReference>
<dbReference type="VEuPathDB" id="AmoebaDB:DDB_G0269872"/>
<dbReference type="eggNOG" id="ENOG502SCSQ">
    <property type="taxonomic scope" value="Eukaryota"/>
</dbReference>
<dbReference type="HOGENOM" id="CLU_1182012_0_0_1"/>
<dbReference type="InParanoid" id="Q55CW7"/>
<dbReference type="OMA" id="NWSTSHY"/>
<dbReference type="PhylomeDB" id="Q55CW7"/>
<dbReference type="PRO" id="PR:Q55CW7"/>
<dbReference type="Proteomes" id="UP000002195">
    <property type="component" value="Chromosome 1"/>
</dbReference>
<dbReference type="GO" id="GO:0016020">
    <property type="term" value="C:membrane"/>
    <property type="evidence" value="ECO:0007669"/>
    <property type="project" value="UniProtKB-SubCell"/>
</dbReference>
<dbReference type="InterPro" id="IPR018499">
    <property type="entry name" value="Tetraspanin/Peripherin"/>
</dbReference>
<dbReference type="PANTHER" id="PTHR19282">
    <property type="entry name" value="TETRASPANIN"/>
    <property type="match status" value="1"/>
</dbReference>
<dbReference type="PANTHER" id="PTHR19282:SF506">
    <property type="entry name" value="TETRASPANIN TSPB-RELATED"/>
    <property type="match status" value="1"/>
</dbReference>
<dbReference type="Pfam" id="PF00335">
    <property type="entry name" value="Tetraspanin"/>
    <property type="match status" value="1"/>
</dbReference>
<dbReference type="PRINTS" id="PR00259">
    <property type="entry name" value="TMFOUR"/>
</dbReference>
<proteinExistence type="inferred from homology"/>
<feature type="chain" id="PRO_0000315597" description="Probable tetraspanin tspB">
    <location>
        <begin position="1"/>
        <end position="235"/>
    </location>
</feature>
<feature type="topological domain" description="Cytoplasmic" evidence="1">
    <location>
        <begin position="1"/>
        <end position="23"/>
    </location>
</feature>
<feature type="transmembrane region" description="Helical" evidence="1">
    <location>
        <begin position="24"/>
        <end position="44"/>
    </location>
</feature>
<feature type="topological domain" description="Extracellular" evidence="1">
    <location>
        <begin position="45"/>
        <end position="68"/>
    </location>
</feature>
<feature type="transmembrane region" description="Helical" evidence="1">
    <location>
        <begin position="69"/>
        <end position="89"/>
    </location>
</feature>
<feature type="topological domain" description="Cytoplasmic" evidence="1">
    <location>
        <begin position="90"/>
        <end position="93"/>
    </location>
</feature>
<feature type="transmembrane region" description="Helical" evidence="1">
    <location>
        <begin position="94"/>
        <end position="114"/>
    </location>
</feature>
<feature type="topological domain" description="Extracellular" evidence="1">
    <location>
        <begin position="115"/>
        <end position="200"/>
    </location>
</feature>
<feature type="transmembrane region" description="Helical" evidence="1">
    <location>
        <begin position="201"/>
        <end position="221"/>
    </location>
</feature>
<feature type="topological domain" description="Cytoplasmic" evidence="1">
    <location>
        <begin position="222"/>
        <end position="235"/>
    </location>
</feature>
<feature type="glycosylation site" description="N-linked (GlcNAc...) asparagine" evidence="1">
    <location>
        <position position="62"/>
    </location>
</feature>
<feature type="glycosylation site" description="N-linked (GlcNAc...) asparagine" evidence="1">
    <location>
        <position position="143"/>
    </location>
</feature>
<feature type="glycosylation site" description="N-linked (GlcNAc...) asparagine" evidence="1">
    <location>
        <position position="159"/>
    </location>
</feature>
<keyword id="KW-0325">Glycoprotein</keyword>
<keyword id="KW-0472">Membrane</keyword>
<keyword id="KW-1185">Reference proteome</keyword>
<keyword id="KW-0812">Transmembrane</keyword>
<keyword id="KW-1133">Transmembrane helix</keyword>
<comment type="subcellular location">
    <subcellularLocation>
        <location evidence="2">Membrane</location>
        <topology evidence="2">Multi-pass membrane protein</topology>
    </subcellularLocation>
</comment>
<comment type="similarity">
    <text evidence="2">Belongs to the tetraspanin (TM4SF) family.</text>
</comment>
<sequence length="235" mass="25464">MVDTTNLIPNTPRYLKVPLIAFNTILWVLGLVLVIIGSIGVSFFSNFKDFTKVSKASAALSNLTTGAPAGVLVIGIFFVILTVIGCFVAGKEKLVGLVIYTMLMLIILVALIGVGGKALTLHNDDVVKQIGNAWEDVSNGPKNSTILKLENFLKCCYWNSTSSRNPLLCPKDSKGIPKYTDTCDSVISSKISSNLYLVGAAAVSIGVIEFICMLFALFLIIRICRAPRTKSYDYQ</sequence>
<name>TSPB_DICDI</name>
<reference key="1">
    <citation type="journal article" date="2005" name="Nature">
        <title>The genome of the social amoeba Dictyostelium discoideum.</title>
        <authorList>
            <person name="Eichinger L."/>
            <person name="Pachebat J.A."/>
            <person name="Gloeckner G."/>
            <person name="Rajandream M.A."/>
            <person name="Sucgang R."/>
            <person name="Berriman M."/>
            <person name="Song J."/>
            <person name="Olsen R."/>
            <person name="Szafranski K."/>
            <person name="Xu Q."/>
            <person name="Tunggal B."/>
            <person name="Kummerfeld S."/>
            <person name="Madera M."/>
            <person name="Konfortov B.A."/>
            <person name="Rivero F."/>
            <person name="Bankier A.T."/>
            <person name="Lehmann R."/>
            <person name="Hamlin N."/>
            <person name="Davies R."/>
            <person name="Gaudet P."/>
            <person name="Fey P."/>
            <person name="Pilcher K."/>
            <person name="Chen G."/>
            <person name="Saunders D."/>
            <person name="Sodergren E.J."/>
            <person name="Davis P."/>
            <person name="Kerhornou A."/>
            <person name="Nie X."/>
            <person name="Hall N."/>
            <person name="Anjard C."/>
            <person name="Hemphill L."/>
            <person name="Bason N."/>
            <person name="Farbrother P."/>
            <person name="Desany B."/>
            <person name="Just E."/>
            <person name="Morio T."/>
            <person name="Rost R."/>
            <person name="Churcher C.M."/>
            <person name="Cooper J."/>
            <person name="Haydock S."/>
            <person name="van Driessche N."/>
            <person name="Cronin A."/>
            <person name="Goodhead I."/>
            <person name="Muzny D.M."/>
            <person name="Mourier T."/>
            <person name="Pain A."/>
            <person name="Lu M."/>
            <person name="Harper D."/>
            <person name="Lindsay R."/>
            <person name="Hauser H."/>
            <person name="James K.D."/>
            <person name="Quiles M."/>
            <person name="Madan Babu M."/>
            <person name="Saito T."/>
            <person name="Buchrieser C."/>
            <person name="Wardroper A."/>
            <person name="Felder M."/>
            <person name="Thangavelu M."/>
            <person name="Johnson D."/>
            <person name="Knights A."/>
            <person name="Loulseged H."/>
            <person name="Mungall K.L."/>
            <person name="Oliver K."/>
            <person name="Price C."/>
            <person name="Quail M.A."/>
            <person name="Urushihara H."/>
            <person name="Hernandez J."/>
            <person name="Rabbinowitsch E."/>
            <person name="Steffen D."/>
            <person name="Sanders M."/>
            <person name="Ma J."/>
            <person name="Kohara Y."/>
            <person name="Sharp S."/>
            <person name="Simmonds M.N."/>
            <person name="Spiegler S."/>
            <person name="Tivey A."/>
            <person name="Sugano S."/>
            <person name="White B."/>
            <person name="Walker D."/>
            <person name="Woodward J.R."/>
            <person name="Winckler T."/>
            <person name="Tanaka Y."/>
            <person name="Shaulsky G."/>
            <person name="Schleicher M."/>
            <person name="Weinstock G.M."/>
            <person name="Rosenthal A."/>
            <person name="Cox E.C."/>
            <person name="Chisholm R.L."/>
            <person name="Gibbs R.A."/>
            <person name="Loomis W.F."/>
            <person name="Platzer M."/>
            <person name="Kay R.R."/>
            <person name="Williams J.G."/>
            <person name="Dear P.H."/>
            <person name="Noegel A.A."/>
            <person name="Barrell B.G."/>
            <person name="Kuspa A."/>
        </authorList>
    </citation>
    <scope>NUCLEOTIDE SEQUENCE [LARGE SCALE GENOMIC DNA]</scope>
    <source>
        <strain>AX4</strain>
    </source>
</reference>